<gene>
    <name evidence="1" type="primary">btuD</name>
    <name type="ordered locus">SeHA_C1470</name>
</gene>
<protein>
    <recommendedName>
        <fullName evidence="1">Vitamin B12 import ATP-binding protein BtuD</fullName>
        <ecNumber evidence="1">7.6.2.8</ecNumber>
    </recommendedName>
    <alternativeName>
        <fullName evidence="1">Vitamin B12-transporting ATPase</fullName>
    </alternativeName>
</protein>
<sequence>MSQLMQLKDVAESTRLGPLSGEVSAGEILHLVGPNGAGKSTLLARMAGLTSGEGSIRFGGAPLEAWATATLAQHRAYLAQQQNPPFAMPVWHYLTLHQPDKTRTGQLNEVADMLGLGDKLGRSVNQLSGGEWQRVRLAAVVLQIHPDANPVGQLLLLDEPMNSLDVAQQNALDRVLHHLCQAGIAIVMSSHDLNHTLRHAHKAWLLKRGKLIACGRREEVLTPSYLAQAYGLRFRRLDVEGHPMLISAT</sequence>
<evidence type="ECO:0000255" key="1">
    <source>
        <dbReference type="HAMAP-Rule" id="MF_01005"/>
    </source>
</evidence>
<reference key="1">
    <citation type="journal article" date="2011" name="J. Bacteriol.">
        <title>Comparative genomics of 28 Salmonella enterica isolates: evidence for CRISPR-mediated adaptive sublineage evolution.</title>
        <authorList>
            <person name="Fricke W.F."/>
            <person name="Mammel M.K."/>
            <person name="McDermott P.F."/>
            <person name="Tartera C."/>
            <person name="White D.G."/>
            <person name="Leclerc J.E."/>
            <person name="Ravel J."/>
            <person name="Cebula T.A."/>
        </authorList>
    </citation>
    <scope>NUCLEOTIDE SEQUENCE [LARGE SCALE GENOMIC DNA]</scope>
    <source>
        <strain>SL476</strain>
    </source>
</reference>
<proteinExistence type="inferred from homology"/>
<name>BTUD_SALHS</name>
<organism>
    <name type="scientific">Salmonella heidelberg (strain SL476)</name>
    <dbReference type="NCBI Taxonomy" id="454169"/>
    <lineage>
        <taxon>Bacteria</taxon>
        <taxon>Pseudomonadati</taxon>
        <taxon>Pseudomonadota</taxon>
        <taxon>Gammaproteobacteria</taxon>
        <taxon>Enterobacterales</taxon>
        <taxon>Enterobacteriaceae</taxon>
        <taxon>Salmonella</taxon>
    </lineage>
</organism>
<feature type="chain" id="PRO_1000134668" description="Vitamin B12 import ATP-binding protein BtuD">
    <location>
        <begin position="1"/>
        <end position="249"/>
    </location>
</feature>
<feature type="domain" description="ABC transporter" evidence="1">
    <location>
        <begin position="1"/>
        <end position="233"/>
    </location>
</feature>
<feature type="binding site" evidence="1">
    <location>
        <begin position="33"/>
        <end position="40"/>
    </location>
    <ligand>
        <name>ATP</name>
        <dbReference type="ChEBI" id="CHEBI:30616"/>
    </ligand>
</feature>
<comment type="function">
    <text evidence="1">Part of the ABC transporter complex BtuCDF involved in vitamin B12 import. Responsible for energy coupling to the transport system.</text>
</comment>
<comment type="catalytic activity">
    <reaction evidence="1">
        <text>an R-cob(III)alamin(out) + ATP + H2O = an R-cob(III)alamin(in) + ADP + phosphate + H(+)</text>
        <dbReference type="Rhea" id="RHEA:17873"/>
        <dbReference type="ChEBI" id="CHEBI:15377"/>
        <dbReference type="ChEBI" id="CHEBI:15378"/>
        <dbReference type="ChEBI" id="CHEBI:30616"/>
        <dbReference type="ChEBI" id="CHEBI:43474"/>
        <dbReference type="ChEBI" id="CHEBI:140785"/>
        <dbReference type="ChEBI" id="CHEBI:456216"/>
        <dbReference type="EC" id="7.6.2.8"/>
    </reaction>
</comment>
<comment type="subunit">
    <text evidence="1">The complex is composed of two ATP-binding proteins (BtuD), two transmembrane proteins (BtuC) and a solute-binding protein (BtuF).</text>
</comment>
<comment type="subcellular location">
    <subcellularLocation>
        <location evidence="1">Cell inner membrane</location>
        <topology evidence="1">Peripheral membrane protein</topology>
    </subcellularLocation>
</comment>
<comment type="similarity">
    <text evidence="1">Belongs to the ABC transporter superfamily. Vitamin B12 importer (TC 3.A.1.13.1) family.</text>
</comment>
<accession>B4TGI0</accession>
<keyword id="KW-0067">ATP-binding</keyword>
<keyword id="KW-0997">Cell inner membrane</keyword>
<keyword id="KW-1003">Cell membrane</keyword>
<keyword id="KW-0472">Membrane</keyword>
<keyword id="KW-0547">Nucleotide-binding</keyword>
<keyword id="KW-1278">Translocase</keyword>
<keyword id="KW-0813">Transport</keyword>
<dbReference type="EC" id="7.6.2.8" evidence="1"/>
<dbReference type="EMBL" id="CP001120">
    <property type="protein sequence ID" value="ACF70169.1"/>
    <property type="molecule type" value="Genomic_DNA"/>
</dbReference>
<dbReference type="RefSeq" id="WP_000080607.1">
    <property type="nucleotide sequence ID" value="NC_011083.1"/>
</dbReference>
<dbReference type="SMR" id="B4TGI0"/>
<dbReference type="KEGG" id="seh:SeHA_C1470"/>
<dbReference type="HOGENOM" id="CLU_000604_1_11_6"/>
<dbReference type="Proteomes" id="UP000001866">
    <property type="component" value="Chromosome"/>
</dbReference>
<dbReference type="GO" id="GO:0005886">
    <property type="term" value="C:plasma membrane"/>
    <property type="evidence" value="ECO:0007669"/>
    <property type="project" value="UniProtKB-SubCell"/>
</dbReference>
<dbReference type="GO" id="GO:0015420">
    <property type="term" value="F:ABC-type vitamin B12 transporter activity"/>
    <property type="evidence" value="ECO:0007669"/>
    <property type="project" value="UniProtKB-UniRule"/>
</dbReference>
<dbReference type="GO" id="GO:0005524">
    <property type="term" value="F:ATP binding"/>
    <property type="evidence" value="ECO:0007669"/>
    <property type="project" value="UniProtKB-KW"/>
</dbReference>
<dbReference type="GO" id="GO:0016887">
    <property type="term" value="F:ATP hydrolysis activity"/>
    <property type="evidence" value="ECO:0007669"/>
    <property type="project" value="InterPro"/>
</dbReference>
<dbReference type="CDD" id="cd03214">
    <property type="entry name" value="ABC_Iron-Siderophores_B12_Hemin"/>
    <property type="match status" value="1"/>
</dbReference>
<dbReference type="FunFam" id="3.40.50.300:FF:000462">
    <property type="entry name" value="Vitamin B12 import ATP-binding protein BtuD"/>
    <property type="match status" value="1"/>
</dbReference>
<dbReference type="Gene3D" id="3.40.50.300">
    <property type="entry name" value="P-loop containing nucleotide triphosphate hydrolases"/>
    <property type="match status" value="1"/>
</dbReference>
<dbReference type="HAMAP" id="MF_01005">
    <property type="entry name" value="BtuD"/>
    <property type="match status" value="1"/>
</dbReference>
<dbReference type="InterPro" id="IPR003593">
    <property type="entry name" value="AAA+_ATPase"/>
</dbReference>
<dbReference type="InterPro" id="IPR003439">
    <property type="entry name" value="ABC_transporter-like_ATP-bd"/>
</dbReference>
<dbReference type="InterPro" id="IPR017871">
    <property type="entry name" value="ABC_transporter-like_CS"/>
</dbReference>
<dbReference type="InterPro" id="IPR023693">
    <property type="entry name" value="ABC_transptr_BtuD"/>
</dbReference>
<dbReference type="InterPro" id="IPR050153">
    <property type="entry name" value="Metal_Ion_Import_ABC"/>
</dbReference>
<dbReference type="InterPro" id="IPR027417">
    <property type="entry name" value="P-loop_NTPase"/>
</dbReference>
<dbReference type="NCBIfam" id="NF002981">
    <property type="entry name" value="PRK03695.1"/>
    <property type="match status" value="1"/>
</dbReference>
<dbReference type="PANTHER" id="PTHR42734">
    <property type="entry name" value="METAL TRANSPORT SYSTEM ATP-BINDING PROTEIN TM_0124-RELATED"/>
    <property type="match status" value="1"/>
</dbReference>
<dbReference type="PANTHER" id="PTHR42734:SF18">
    <property type="entry name" value="VITAMIN B12 IMPORT ATP-BINDING PROTEIN BTUD"/>
    <property type="match status" value="1"/>
</dbReference>
<dbReference type="Pfam" id="PF00005">
    <property type="entry name" value="ABC_tran"/>
    <property type="match status" value="1"/>
</dbReference>
<dbReference type="SMART" id="SM00382">
    <property type="entry name" value="AAA"/>
    <property type="match status" value="1"/>
</dbReference>
<dbReference type="SUPFAM" id="SSF52540">
    <property type="entry name" value="P-loop containing nucleoside triphosphate hydrolases"/>
    <property type="match status" value="1"/>
</dbReference>
<dbReference type="PROSITE" id="PS00211">
    <property type="entry name" value="ABC_TRANSPORTER_1"/>
    <property type="match status" value="1"/>
</dbReference>
<dbReference type="PROSITE" id="PS50893">
    <property type="entry name" value="ABC_TRANSPORTER_2"/>
    <property type="match status" value="1"/>
</dbReference>